<name>UBIE_RHOPA</name>
<gene>
    <name evidence="1" type="primary">ubiE</name>
    <name type="ordered locus">RPA0083</name>
</gene>
<comment type="function">
    <text evidence="1">Methyltransferase required for the conversion of demethylmenaquinol (DMKH2) to menaquinol (MKH2) and the conversion of 2-polyprenyl-6-methoxy-1,4-benzoquinol (DDMQH2) to 2-polyprenyl-3-methyl-6-methoxy-1,4-benzoquinol (DMQH2).</text>
</comment>
<comment type="catalytic activity">
    <reaction evidence="1">
        <text>a 2-demethylmenaquinol + S-adenosyl-L-methionine = a menaquinol + S-adenosyl-L-homocysteine + H(+)</text>
        <dbReference type="Rhea" id="RHEA:42640"/>
        <dbReference type="Rhea" id="RHEA-COMP:9539"/>
        <dbReference type="Rhea" id="RHEA-COMP:9563"/>
        <dbReference type="ChEBI" id="CHEBI:15378"/>
        <dbReference type="ChEBI" id="CHEBI:18151"/>
        <dbReference type="ChEBI" id="CHEBI:55437"/>
        <dbReference type="ChEBI" id="CHEBI:57856"/>
        <dbReference type="ChEBI" id="CHEBI:59789"/>
        <dbReference type="EC" id="2.1.1.163"/>
    </reaction>
</comment>
<comment type="catalytic activity">
    <reaction evidence="1">
        <text>a 2-methoxy-6-(all-trans-polyprenyl)benzene-1,4-diol + S-adenosyl-L-methionine = a 5-methoxy-2-methyl-3-(all-trans-polyprenyl)benzene-1,4-diol + S-adenosyl-L-homocysteine + H(+)</text>
        <dbReference type="Rhea" id="RHEA:28286"/>
        <dbReference type="Rhea" id="RHEA-COMP:10858"/>
        <dbReference type="Rhea" id="RHEA-COMP:10859"/>
        <dbReference type="ChEBI" id="CHEBI:15378"/>
        <dbReference type="ChEBI" id="CHEBI:57856"/>
        <dbReference type="ChEBI" id="CHEBI:59789"/>
        <dbReference type="ChEBI" id="CHEBI:84166"/>
        <dbReference type="ChEBI" id="CHEBI:84167"/>
        <dbReference type="EC" id="2.1.1.201"/>
    </reaction>
</comment>
<comment type="pathway">
    <text evidence="1">Quinol/quinone metabolism; menaquinone biosynthesis; menaquinol from 1,4-dihydroxy-2-naphthoate: step 2/2.</text>
</comment>
<comment type="pathway">
    <text evidence="1">Cofactor biosynthesis; ubiquinone biosynthesis.</text>
</comment>
<comment type="similarity">
    <text evidence="1">Belongs to the class I-like SAM-binding methyltransferase superfamily. MenG/UbiE family.</text>
</comment>
<dbReference type="EC" id="2.1.1.163" evidence="1"/>
<dbReference type="EC" id="2.1.1.201" evidence="1"/>
<dbReference type="EMBL" id="BX572593">
    <property type="protein sequence ID" value="CAE25527.1"/>
    <property type="molecule type" value="Genomic_DNA"/>
</dbReference>
<dbReference type="RefSeq" id="WP_011155654.1">
    <property type="nucleotide sequence ID" value="NZ_CP116810.1"/>
</dbReference>
<dbReference type="SMR" id="Q6NDM2"/>
<dbReference type="STRING" id="258594.RPA0083"/>
<dbReference type="GeneID" id="66891084"/>
<dbReference type="eggNOG" id="COG2226">
    <property type="taxonomic scope" value="Bacteria"/>
</dbReference>
<dbReference type="HOGENOM" id="CLU_037990_0_1_5"/>
<dbReference type="PhylomeDB" id="Q6NDM2"/>
<dbReference type="UniPathway" id="UPA00079">
    <property type="reaction ID" value="UER00169"/>
</dbReference>
<dbReference type="UniPathway" id="UPA00232"/>
<dbReference type="GO" id="GO:0008425">
    <property type="term" value="F:2-methoxy-6-polyprenyl-1,4-benzoquinol methyltransferase activity"/>
    <property type="evidence" value="ECO:0007669"/>
    <property type="project" value="UniProtKB-UniRule"/>
</dbReference>
<dbReference type="GO" id="GO:0043770">
    <property type="term" value="F:demethylmenaquinone methyltransferase activity"/>
    <property type="evidence" value="ECO:0007669"/>
    <property type="project" value="UniProtKB-UniRule"/>
</dbReference>
<dbReference type="GO" id="GO:0009060">
    <property type="term" value="P:aerobic respiration"/>
    <property type="evidence" value="ECO:0007669"/>
    <property type="project" value="UniProtKB-UniRule"/>
</dbReference>
<dbReference type="GO" id="GO:0009234">
    <property type="term" value="P:menaquinone biosynthetic process"/>
    <property type="evidence" value="ECO:0007669"/>
    <property type="project" value="UniProtKB-UniRule"/>
</dbReference>
<dbReference type="GO" id="GO:0032259">
    <property type="term" value="P:methylation"/>
    <property type="evidence" value="ECO:0007669"/>
    <property type="project" value="UniProtKB-KW"/>
</dbReference>
<dbReference type="CDD" id="cd02440">
    <property type="entry name" value="AdoMet_MTases"/>
    <property type="match status" value="1"/>
</dbReference>
<dbReference type="Gene3D" id="3.40.50.150">
    <property type="entry name" value="Vaccinia Virus protein VP39"/>
    <property type="match status" value="1"/>
</dbReference>
<dbReference type="HAMAP" id="MF_01813">
    <property type="entry name" value="MenG_UbiE_methyltr"/>
    <property type="match status" value="1"/>
</dbReference>
<dbReference type="InterPro" id="IPR029063">
    <property type="entry name" value="SAM-dependent_MTases_sf"/>
</dbReference>
<dbReference type="InterPro" id="IPR004033">
    <property type="entry name" value="UbiE/COQ5_MeTrFase"/>
</dbReference>
<dbReference type="InterPro" id="IPR023576">
    <property type="entry name" value="UbiE/COQ5_MeTrFase_CS"/>
</dbReference>
<dbReference type="NCBIfam" id="TIGR01934">
    <property type="entry name" value="MenG_MenH_UbiE"/>
    <property type="match status" value="1"/>
</dbReference>
<dbReference type="NCBIfam" id="NF001242">
    <property type="entry name" value="PRK00216.1-3"/>
    <property type="match status" value="1"/>
</dbReference>
<dbReference type="PANTHER" id="PTHR43591:SF24">
    <property type="entry name" value="2-METHOXY-6-POLYPRENYL-1,4-BENZOQUINOL METHYLASE, MITOCHONDRIAL"/>
    <property type="match status" value="1"/>
</dbReference>
<dbReference type="PANTHER" id="PTHR43591">
    <property type="entry name" value="METHYLTRANSFERASE"/>
    <property type="match status" value="1"/>
</dbReference>
<dbReference type="Pfam" id="PF01209">
    <property type="entry name" value="Ubie_methyltran"/>
    <property type="match status" value="1"/>
</dbReference>
<dbReference type="SUPFAM" id="SSF53335">
    <property type="entry name" value="S-adenosyl-L-methionine-dependent methyltransferases"/>
    <property type="match status" value="1"/>
</dbReference>
<dbReference type="PROSITE" id="PS51608">
    <property type="entry name" value="SAM_MT_UBIE"/>
    <property type="match status" value="1"/>
</dbReference>
<dbReference type="PROSITE" id="PS01183">
    <property type="entry name" value="UBIE_1"/>
    <property type="match status" value="1"/>
</dbReference>
<dbReference type="PROSITE" id="PS01184">
    <property type="entry name" value="UBIE_2"/>
    <property type="match status" value="1"/>
</dbReference>
<keyword id="KW-0474">Menaquinone biosynthesis</keyword>
<keyword id="KW-0489">Methyltransferase</keyword>
<keyword id="KW-0949">S-adenosyl-L-methionine</keyword>
<keyword id="KW-0808">Transferase</keyword>
<keyword id="KW-0831">Ubiquinone biosynthesis</keyword>
<proteinExistence type="inferred from homology"/>
<organism>
    <name type="scientific">Rhodopseudomonas palustris (strain ATCC BAA-98 / CGA009)</name>
    <dbReference type="NCBI Taxonomy" id="258594"/>
    <lineage>
        <taxon>Bacteria</taxon>
        <taxon>Pseudomonadati</taxon>
        <taxon>Pseudomonadota</taxon>
        <taxon>Alphaproteobacteria</taxon>
        <taxon>Hyphomicrobiales</taxon>
        <taxon>Nitrobacteraceae</taxon>
        <taxon>Rhodopseudomonas</taxon>
    </lineage>
</organism>
<reference key="1">
    <citation type="journal article" date="2004" name="Nat. Biotechnol.">
        <title>Complete genome sequence of the metabolically versatile photosynthetic bacterium Rhodopseudomonas palustris.</title>
        <authorList>
            <person name="Larimer F.W."/>
            <person name="Chain P."/>
            <person name="Hauser L."/>
            <person name="Lamerdin J.E."/>
            <person name="Malfatti S."/>
            <person name="Do L."/>
            <person name="Land M.L."/>
            <person name="Pelletier D.A."/>
            <person name="Beatty J.T."/>
            <person name="Lang A.S."/>
            <person name="Tabita F.R."/>
            <person name="Gibson J.L."/>
            <person name="Hanson T.E."/>
            <person name="Bobst C."/>
            <person name="Torres y Torres J.L."/>
            <person name="Peres C."/>
            <person name="Harrison F.H."/>
            <person name="Gibson J."/>
            <person name="Harwood C.S."/>
        </authorList>
    </citation>
    <scope>NUCLEOTIDE SEQUENCE [LARGE SCALE GENOMIC DNA]</scope>
    <source>
        <strain>ATCC BAA-98 / CGA009</strain>
    </source>
</reference>
<accession>Q6NDM2</accession>
<sequence length="253" mass="28394">MTEPGETTHFGYRDVPLDEKQTLVNDVFHSVAGRYDLMNDLMSGGMHRLWKDVMITTLNPPRDDTPFRLLDVAGGTGDISFRAAKASGAGFHSTVCDINTDMLEVGRQRAVERNLDDKVDFVEGNAESLQFDDRSFDAYTIAFGIRNVPRIDLALKEAYRVLKPGSRFLCLEFSSVDVPGLSKLYDLFSFKVIPEIGRVVTGDADSYQYLVESIRKFPKPYDFAEMMRDAGFARANWQVMSGGIVALHSGWRL</sequence>
<evidence type="ECO:0000255" key="1">
    <source>
        <dbReference type="HAMAP-Rule" id="MF_01813"/>
    </source>
</evidence>
<protein>
    <recommendedName>
        <fullName evidence="1">Ubiquinone/menaquinone biosynthesis C-methyltransferase UbiE</fullName>
        <ecNumber evidence="1">2.1.1.163</ecNumber>
        <ecNumber evidence="1">2.1.1.201</ecNumber>
    </recommendedName>
    <alternativeName>
        <fullName evidence="1">2-methoxy-6-polyprenyl-1,4-benzoquinol methylase</fullName>
    </alternativeName>
    <alternativeName>
        <fullName evidence="1">Demethylmenaquinone methyltransferase</fullName>
    </alternativeName>
</protein>
<feature type="chain" id="PRO_0000193319" description="Ubiquinone/menaquinone biosynthesis C-methyltransferase UbiE">
    <location>
        <begin position="1"/>
        <end position="253"/>
    </location>
</feature>
<feature type="binding site" evidence="1">
    <location>
        <position position="76"/>
    </location>
    <ligand>
        <name>S-adenosyl-L-methionine</name>
        <dbReference type="ChEBI" id="CHEBI:59789"/>
    </ligand>
</feature>
<feature type="binding site" evidence="1">
    <location>
        <position position="97"/>
    </location>
    <ligand>
        <name>S-adenosyl-L-methionine</name>
        <dbReference type="ChEBI" id="CHEBI:59789"/>
    </ligand>
</feature>
<feature type="binding site" evidence="1">
    <location>
        <begin position="125"/>
        <end position="126"/>
    </location>
    <ligand>
        <name>S-adenosyl-L-methionine</name>
        <dbReference type="ChEBI" id="CHEBI:59789"/>
    </ligand>
</feature>